<keyword id="KW-0963">Cytoplasm</keyword>
<keyword id="KW-0324">Glycolysis</keyword>
<keyword id="KW-0456">Lyase</keyword>
<keyword id="KW-0460">Magnesium</keyword>
<keyword id="KW-0479">Metal-binding</keyword>
<keyword id="KW-0964">Secreted</keyword>
<comment type="function">
    <text evidence="1">Catalyzes the reversible conversion of 2-phosphoglycerate (2-PG) into phosphoenolpyruvate (PEP). It is essential for the degradation of carbohydrates via glycolysis.</text>
</comment>
<comment type="catalytic activity">
    <reaction evidence="1">
        <text>(2R)-2-phosphoglycerate = phosphoenolpyruvate + H2O</text>
        <dbReference type="Rhea" id="RHEA:10164"/>
        <dbReference type="ChEBI" id="CHEBI:15377"/>
        <dbReference type="ChEBI" id="CHEBI:58289"/>
        <dbReference type="ChEBI" id="CHEBI:58702"/>
        <dbReference type="EC" id="4.2.1.11"/>
    </reaction>
</comment>
<comment type="cofactor">
    <cofactor evidence="1">
        <name>Mg(2+)</name>
        <dbReference type="ChEBI" id="CHEBI:18420"/>
    </cofactor>
    <text evidence="1">Binds a second Mg(2+) ion via substrate during catalysis.</text>
</comment>
<comment type="pathway">
    <text evidence="1">Carbohydrate degradation; glycolysis; pyruvate from D-glyceraldehyde 3-phosphate: step 4/5.</text>
</comment>
<comment type="subcellular location">
    <subcellularLocation>
        <location evidence="1">Cytoplasm</location>
    </subcellularLocation>
    <subcellularLocation>
        <location evidence="1">Secreted</location>
    </subcellularLocation>
    <subcellularLocation>
        <location evidence="1">Cell surface</location>
    </subcellularLocation>
    <text evidence="1">Fractions of enolase are present in both the cytoplasm and on the cell surface.</text>
</comment>
<comment type="similarity">
    <text evidence="1">Belongs to the enolase family.</text>
</comment>
<proteinExistence type="inferred from homology"/>
<dbReference type="EC" id="4.2.1.11" evidence="1"/>
<dbReference type="EMBL" id="AP006861">
    <property type="protein sequence ID" value="BAE80823.1"/>
    <property type="molecule type" value="Genomic_DNA"/>
</dbReference>
<dbReference type="RefSeq" id="WP_011457608.1">
    <property type="nucleotide sequence ID" value="NC_007899.1"/>
</dbReference>
<dbReference type="SMR" id="Q256G5"/>
<dbReference type="STRING" id="264202.CF0051"/>
<dbReference type="KEGG" id="cfe:CF0051"/>
<dbReference type="eggNOG" id="COG0148">
    <property type="taxonomic scope" value="Bacteria"/>
</dbReference>
<dbReference type="HOGENOM" id="CLU_031223_2_1_0"/>
<dbReference type="OrthoDB" id="9804716at2"/>
<dbReference type="UniPathway" id="UPA00109">
    <property type="reaction ID" value="UER00187"/>
</dbReference>
<dbReference type="Proteomes" id="UP000001260">
    <property type="component" value="Chromosome"/>
</dbReference>
<dbReference type="GO" id="GO:0009986">
    <property type="term" value="C:cell surface"/>
    <property type="evidence" value="ECO:0007669"/>
    <property type="project" value="UniProtKB-SubCell"/>
</dbReference>
<dbReference type="GO" id="GO:0005576">
    <property type="term" value="C:extracellular region"/>
    <property type="evidence" value="ECO:0007669"/>
    <property type="project" value="UniProtKB-SubCell"/>
</dbReference>
<dbReference type="GO" id="GO:0000015">
    <property type="term" value="C:phosphopyruvate hydratase complex"/>
    <property type="evidence" value="ECO:0007669"/>
    <property type="project" value="InterPro"/>
</dbReference>
<dbReference type="GO" id="GO:0000287">
    <property type="term" value="F:magnesium ion binding"/>
    <property type="evidence" value="ECO:0007669"/>
    <property type="project" value="UniProtKB-UniRule"/>
</dbReference>
<dbReference type="GO" id="GO:0004634">
    <property type="term" value="F:phosphopyruvate hydratase activity"/>
    <property type="evidence" value="ECO:0007669"/>
    <property type="project" value="UniProtKB-UniRule"/>
</dbReference>
<dbReference type="GO" id="GO:0006096">
    <property type="term" value="P:glycolytic process"/>
    <property type="evidence" value="ECO:0007669"/>
    <property type="project" value="UniProtKB-UniRule"/>
</dbReference>
<dbReference type="CDD" id="cd03313">
    <property type="entry name" value="enolase"/>
    <property type="match status" value="1"/>
</dbReference>
<dbReference type="Gene3D" id="3.20.20.120">
    <property type="entry name" value="Enolase-like C-terminal domain"/>
    <property type="match status" value="1"/>
</dbReference>
<dbReference type="Gene3D" id="3.30.390.10">
    <property type="entry name" value="Enolase-like, N-terminal domain"/>
    <property type="match status" value="1"/>
</dbReference>
<dbReference type="HAMAP" id="MF_00318">
    <property type="entry name" value="Enolase"/>
    <property type="match status" value="1"/>
</dbReference>
<dbReference type="InterPro" id="IPR000941">
    <property type="entry name" value="Enolase"/>
</dbReference>
<dbReference type="InterPro" id="IPR036849">
    <property type="entry name" value="Enolase-like_C_sf"/>
</dbReference>
<dbReference type="InterPro" id="IPR029017">
    <property type="entry name" value="Enolase-like_N"/>
</dbReference>
<dbReference type="InterPro" id="IPR020810">
    <property type="entry name" value="Enolase_C"/>
</dbReference>
<dbReference type="InterPro" id="IPR020809">
    <property type="entry name" value="Enolase_CS"/>
</dbReference>
<dbReference type="InterPro" id="IPR020811">
    <property type="entry name" value="Enolase_N"/>
</dbReference>
<dbReference type="NCBIfam" id="TIGR01060">
    <property type="entry name" value="eno"/>
    <property type="match status" value="1"/>
</dbReference>
<dbReference type="PANTHER" id="PTHR11902">
    <property type="entry name" value="ENOLASE"/>
    <property type="match status" value="1"/>
</dbReference>
<dbReference type="PANTHER" id="PTHR11902:SF1">
    <property type="entry name" value="ENOLASE"/>
    <property type="match status" value="1"/>
</dbReference>
<dbReference type="Pfam" id="PF00113">
    <property type="entry name" value="Enolase_C"/>
    <property type="match status" value="1"/>
</dbReference>
<dbReference type="Pfam" id="PF03952">
    <property type="entry name" value="Enolase_N"/>
    <property type="match status" value="1"/>
</dbReference>
<dbReference type="PIRSF" id="PIRSF001400">
    <property type="entry name" value="Enolase"/>
    <property type="match status" value="1"/>
</dbReference>
<dbReference type="PRINTS" id="PR00148">
    <property type="entry name" value="ENOLASE"/>
</dbReference>
<dbReference type="SFLD" id="SFLDF00002">
    <property type="entry name" value="enolase"/>
    <property type="match status" value="1"/>
</dbReference>
<dbReference type="SFLD" id="SFLDG00178">
    <property type="entry name" value="enolase"/>
    <property type="match status" value="1"/>
</dbReference>
<dbReference type="SMART" id="SM01192">
    <property type="entry name" value="Enolase_C"/>
    <property type="match status" value="1"/>
</dbReference>
<dbReference type="SMART" id="SM01193">
    <property type="entry name" value="Enolase_N"/>
    <property type="match status" value="1"/>
</dbReference>
<dbReference type="SUPFAM" id="SSF51604">
    <property type="entry name" value="Enolase C-terminal domain-like"/>
    <property type="match status" value="1"/>
</dbReference>
<dbReference type="SUPFAM" id="SSF54826">
    <property type="entry name" value="Enolase N-terminal domain-like"/>
    <property type="match status" value="1"/>
</dbReference>
<dbReference type="PROSITE" id="PS00164">
    <property type="entry name" value="ENOLASE"/>
    <property type="match status" value="1"/>
</dbReference>
<protein>
    <recommendedName>
        <fullName evidence="1">Enolase</fullName>
        <ecNumber evidence="1">4.2.1.11</ecNumber>
    </recommendedName>
    <alternativeName>
        <fullName evidence="1">2-phospho-D-glycerate hydro-lyase</fullName>
    </alternativeName>
    <alternativeName>
        <fullName evidence="1">2-phosphoglycerate dehydratase</fullName>
    </alternativeName>
</protein>
<sequence>MLEVAISDIQAREILDSRGYPTLYVKVITDAGTFGEACVPSGASTGIKEALELRDHDTSRYQGKGVLQALNNVKEVLLPVVQGVNIFDQILIDSIMVEADGTPNKEKLGANAILGISLAAAKAAAATLGQPFYRYVGGCFSHVLPCPMMNLINGGMHANNGLQFQEFMIRPIGATSIKEAVRMGADVFHTLKKLLNDKNLATGVGDEGGFAPQLKSNSEALDLLVLAIEKSGFQPGKEISLALDCAASSFYDTKTKTYEGKSYQEQVEILADLCDRYPIDSIEDGLAEEDFDGWDLLTAELGDAIQIVGDDLFVTNPELIAEGISKGRANAVLIKPNQIGTLTETSEAIQLAHNQGYTTILSHRSGETEDTTIADLAVAFNTGQIKTGSLSRSERIAKYNRLMAIEEELGPVGLFKDSNPFSGE</sequence>
<organism>
    <name type="scientific">Chlamydia felis (strain Fe/C-56)</name>
    <name type="common">Chlamydophila felis</name>
    <dbReference type="NCBI Taxonomy" id="264202"/>
    <lineage>
        <taxon>Bacteria</taxon>
        <taxon>Pseudomonadati</taxon>
        <taxon>Chlamydiota</taxon>
        <taxon>Chlamydiia</taxon>
        <taxon>Chlamydiales</taxon>
        <taxon>Chlamydiaceae</taxon>
        <taxon>Chlamydia/Chlamydophila group</taxon>
        <taxon>Chlamydia</taxon>
    </lineage>
</organism>
<gene>
    <name evidence="1" type="primary">eno</name>
    <name type="ordered locus">CF0051</name>
</gene>
<accession>Q256G5</accession>
<name>ENO_CHLFF</name>
<reference key="1">
    <citation type="journal article" date="2006" name="DNA Res.">
        <title>Genome sequence of the cat pathogen, Chlamydophila felis.</title>
        <authorList>
            <person name="Azuma Y."/>
            <person name="Hirakawa H."/>
            <person name="Yamashita A."/>
            <person name="Cai Y."/>
            <person name="Rahman M.A."/>
            <person name="Suzuki H."/>
            <person name="Mitaku S."/>
            <person name="Toh H."/>
            <person name="Goto S."/>
            <person name="Murakami T."/>
            <person name="Sugi K."/>
            <person name="Hayashi H."/>
            <person name="Fukushi H."/>
            <person name="Hattori M."/>
            <person name="Kuhara S."/>
            <person name="Shirai M."/>
        </authorList>
    </citation>
    <scope>NUCLEOTIDE SEQUENCE [LARGE SCALE GENOMIC DNA]</scope>
    <source>
        <strain>Fe/C-56</strain>
    </source>
</reference>
<feature type="chain" id="PRO_0000267015" description="Enolase">
    <location>
        <begin position="1"/>
        <end position="424"/>
    </location>
</feature>
<feature type="active site" description="Proton donor" evidence="1">
    <location>
        <position position="207"/>
    </location>
</feature>
<feature type="active site" description="Proton acceptor" evidence="1">
    <location>
        <position position="335"/>
    </location>
</feature>
<feature type="binding site" evidence="1">
    <location>
        <position position="165"/>
    </location>
    <ligand>
        <name>(2R)-2-phosphoglycerate</name>
        <dbReference type="ChEBI" id="CHEBI:58289"/>
    </ligand>
</feature>
<feature type="binding site" evidence="1">
    <location>
        <position position="244"/>
    </location>
    <ligand>
        <name>Mg(2+)</name>
        <dbReference type="ChEBI" id="CHEBI:18420"/>
    </ligand>
</feature>
<feature type="binding site" evidence="1">
    <location>
        <position position="283"/>
    </location>
    <ligand>
        <name>Mg(2+)</name>
        <dbReference type="ChEBI" id="CHEBI:18420"/>
    </ligand>
</feature>
<feature type="binding site" evidence="1">
    <location>
        <position position="310"/>
    </location>
    <ligand>
        <name>Mg(2+)</name>
        <dbReference type="ChEBI" id="CHEBI:18420"/>
    </ligand>
</feature>
<feature type="binding site" evidence="1">
    <location>
        <position position="335"/>
    </location>
    <ligand>
        <name>(2R)-2-phosphoglycerate</name>
        <dbReference type="ChEBI" id="CHEBI:58289"/>
    </ligand>
</feature>
<feature type="binding site" evidence="1">
    <location>
        <position position="364"/>
    </location>
    <ligand>
        <name>(2R)-2-phosphoglycerate</name>
        <dbReference type="ChEBI" id="CHEBI:58289"/>
    </ligand>
</feature>
<feature type="binding site" evidence="1">
    <location>
        <position position="365"/>
    </location>
    <ligand>
        <name>(2R)-2-phosphoglycerate</name>
        <dbReference type="ChEBI" id="CHEBI:58289"/>
    </ligand>
</feature>
<feature type="binding site" evidence="1">
    <location>
        <position position="386"/>
    </location>
    <ligand>
        <name>(2R)-2-phosphoglycerate</name>
        <dbReference type="ChEBI" id="CHEBI:58289"/>
    </ligand>
</feature>
<evidence type="ECO:0000255" key="1">
    <source>
        <dbReference type="HAMAP-Rule" id="MF_00318"/>
    </source>
</evidence>